<reference key="1">
    <citation type="journal article" date="2009" name="ISME J.">
        <title>The genome sequence of the psychrophilic archaeon, Methanococcoides burtonii: the role of genome evolution in cold adaptation.</title>
        <authorList>
            <person name="Allen M.A."/>
            <person name="Lauro F.M."/>
            <person name="Williams T.J."/>
            <person name="Burg D."/>
            <person name="Siddiqui K.S."/>
            <person name="De Francisci D."/>
            <person name="Chong K.W."/>
            <person name="Pilak O."/>
            <person name="Chew H.H."/>
            <person name="De Maere M.Z."/>
            <person name="Ting L."/>
            <person name="Katrib M."/>
            <person name="Ng C."/>
            <person name="Sowers K.R."/>
            <person name="Galperin M.Y."/>
            <person name="Anderson I.J."/>
            <person name="Ivanova N."/>
            <person name="Dalin E."/>
            <person name="Martinez M."/>
            <person name="Lapidus A."/>
            <person name="Hauser L."/>
            <person name="Land M."/>
            <person name="Thomas T."/>
            <person name="Cavicchioli R."/>
        </authorList>
    </citation>
    <scope>NUCLEOTIDE SEQUENCE [LARGE SCALE GENOMIC DNA]</scope>
    <source>
        <strain>DSM 6242 / NBRC 107633 / OCM 468 / ACE-M</strain>
    </source>
</reference>
<organism>
    <name type="scientific">Methanococcoides burtonii (strain DSM 6242 / NBRC 107633 / OCM 468 / ACE-M)</name>
    <dbReference type="NCBI Taxonomy" id="259564"/>
    <lineage>
        <taxon>Archaea</taxon>
        <taxon>Methanobacteriati</taxon>
        <taxon>Methanobacteriota</taxon>
        <taxon>Stenosarchaea group</taxon>
        <taxon>Methanomicrobia</taxon>
        <taxon>Methanosarcinales</taxon>
        <taxon>Methanosarcinaceae</taxon>
        <taxon>Methanococcoides</taxon>
    </lineage>
</organism>
<gene>
    <name evidence="1" type="primary">rps19</name>
    <name type="ordered locus">Mbur_0005</name>
</gene>
<feature type="chain" id="PRO_0000265470" description="Small ribosomal subunit protein uS19">
    <location>
        <begin position="1"/>
        <end position="137"/>
    </location>
</feature>
<feature type="region of interest" description="Disordered" evidence="2">
    <location>
        <begin position="115"/>
        <end position="137"/>
    </location>
</feature>
<name>RS19_METBU</name>
<evidence type="ECO:0000255" key="1">
    <source>
        <dbReference type="HAMAP-Rule" id="MF_00531"/>
    </source>
</evidence>
<evidence type="ECO:0000256" key="2">
    <source>
        <dbReference type="SAM" id="MobiDB-lite"/>
    </source>
</evidence>
<evidence type="ECO:0000305" key="3"/>
<proteinExistence type="inferred from homology"/>
<dbReference type="EMBL" id="CP000300">
    <property type="protein sequence ID" value="ABE51029.1"/>
    <property type="molecule type" value="Genomic_DNA"/>
</dbReference>
<dbReference type="RefSeq" id="WP_011498193.1">
    <property type="nucleotide sequence ID" value="NC_007955.1"/>
</dbReference>
<dbReference type="SMR" id="Q12ZU7"/>
<dbReference type="STRING" id="259564.Mbur_0005"/>
<dbReference type="GeneID" id="3996905"/>
<dbReference type="KEGG" id="mbu:Mbur_0005"/>
<dbReference type="HOGENOM" id="CLU_097347_1_0_2"/>
<dbReference type="OrthoDB" id="30559at2157"/>
<dbReference type="Proteomes" id="UP000001979">
    <property type="component" value="Chromosome"/>
</dbReference>
<dbReference type="GO" id="GO:0022627">
    <property type="term" value="C:cytosolic small ribosomal subunit"/>
    <property type="evidence" value="ECO:0007669"/>
    <property type="project" value="TreeGrafter"/>
</dbReference>
<dbReference type="GO" id="GO:0019843">
    <property type="term" value="F:rRNA binding"/>
    <property type="evidence" value="ECO:0007669"/>
    <property type="project" value="UniProtKB-UniRule"/>
</dbReference>
<dbReference type="GO" id="GO:0003735">
    <property type="term" value="F:structural constituent of ribosome"/>
    <property type="evidence" value="ECO:0007669"/>
    <property type="project" value="InterPro"/>
</dbReference>
<dbReference type="GO" id="GO:0000028">
    <property type="term" value="P:ribosomal small subunit assembly"/>
    <property type="evidence" value="ECO:0007669"/>
    <property type="project" value="TreeGrafter"/>
</dbReference>
<dbReference type="GO" id="GO:0006412">
    <property type="term" value="P:translation"/>
    <property type="evidence" value="ECO:0007669"/>
    <property type="project" value="UniProtKB-UniRule"/>
</dbReference>
<dbReference type="FunFam" id="3.30.860.10:FF:000002">
    <property type="entry name" value="40S ribosomal protein S15"/>
    <property type="match status" value="1"/>
</dbReference>
<dbReference type="Gene3D" id="3.30.860.10">
    <property type="entry name" value="30s Ribosomal Protein S19, Chain A"/>
    <property type="match status" value="1"/>
</dbReference>
<dbReference type="HAMAP" id="MF_00531">
    <property type="entry name" value="Ribosomal_uS19"/>
    <property type="match status" value="1"/>
</dbReference>
<dbReference type="InterPro" id="IPR002222">
    <property type="entry name" value="Ribosomal_uS19"/>
</dbReference>
<dbReference type="InterPro" id="IPR020934">
    <property type="entry name" value="Ribosomal_uS19_CS"/>
</dbReference>
<dbReference type="InterPro" id="IPR005713">
    <property type="entry name" value="Ribosomal_uS19_euk/arc"/>
</dbReference>
<dbReference type="InterPro" id="IPR023575">
    <property type="entry name" value="Ribosomal_uS19_SF"/>
</dbReference>
<dbReference type="NCBIfam" id="NF003121">
    <property type="entry name" value="PRK04038.1"/>
    <property type="match status" value="1"/>
</dbReference>
<dbReference type="NCBIfam" id="TIGR01025">
    <property type="entry name" value="uS19_arch"/>
    <property type="match status" value="1"/>
</dbReference>
<dbReference type="PANTHER" id="PTHR11880">
    <property type="entry name" value="RIBOSOMAL PROTEIN S19P FAMILY MEMBER"/>
    <property type="match status" value="1"/>
</dbReference>
<dbReference type="PANTHER" id="PTHR11880:SF2">
    <property type="entry name" value="SMALL RIBOSOMAL SUBUNIT PROTEIN US19"/>
    <property type="match status" value="1"/>
</dbReference>
<dbReference type="Pfam" id="PF00203">
    <property type="entry name" value="Ribosomal_S19"/>
    <property type="match status" value="1"/>
</dbReference>
<dbReference type="PIRSF" id="PIRSF002144">
    <property type="entry name" value="Ribosomal_S19"/>
    <property type="match status" value="1"/>
</dbReference>
<dbReference type="PRINTS" id="PR00975">
    <property type="entry name" value="RIBOSOMALS19"/>
</dbReference>
<dbReference type="SUPFAM" id="SSF54570">
    <property type="entry name" value="Ribosomal protein S19"/>
    <property type="match status" value="1"/>
</dbReference>
<dbReference type="PROSITE" id="PS00323">
    <property type="entry name" value="RIBOSOMAL_S19"/>
    <property type="match status" value="1"/>
</dbReference>
<sequence>MAKKSTSRLPKRKGEYTFRGKTVAQLQEMSFEDFAELLPAKERRSIRRGFSDSQKGVLQQFRDGKESVRTHFRNMIIFPEMIGKNLEVYNGKEFVKIEIMPEMIGHRFGEYSPTRNRVSHGSAGVGATRSSKFVPLK</sequence>
<accession>Q12ZU7</accession>
<keyword id="KW-0687">Ribonucleoprotein</keyword>
<keyword id="KW-0689">Ribosomal protein</keyword>
<keyword id="KW-0694">RNA-binding</keyword>
<keyword id="KW-0699">rRNA-binding</keyword>
<comment type="function">
    <text evidence="1">Protein S19 forms a complex with S13 that binds strongly to the 16S ribosomal RNA.</text>
</comment>
<comment type="similarity">
    <text evidence="1">Belongs to the universal ribosomal protein uS19 family.</text>
</comment>
<protein>
    <recommendedName>
        <fullName evidence="1">Small ribosomal subunit protein uS19</fullName>
    </recommendedName>
    <alternativeName>
        <fullName evidence="3">30S ribosomal protein S19</fullName>
    </alternativeName>
</protein>